<name>KEFC_SHISS</name>
<sequence length="620" mass="67761">MDSHTLIQALIYLGSAALIVPIAVRLGLGSVLGYLIAGCIIGPWGLRLVTDAESILHFAEIGVVLMLFIIGLELDPQRLWKLRAAVFGGGALQMVICGGLLGLFCMLLGLHWQVAELIGMTLALSSTAIAMQAMNERNLMVTQMGRSAFAVLLFQDIAAIPLVAMIPLLATSSASTTMGAFALSALKVAGALVLVVLLGRYVTRPALRFVARSGLREVFSAVALFLVFGFGLLLEEVGLSMAMGAFLAGVLLASSEYRHALESDIEPFKGLLLGLFFIGVGMSIDFGTLLENPLRIVILLLGFLIIKIAMLWLIARPLQVPNKQRRWFAVLLGQGSEFAFVVFGTAQMANVLEPEWAKSLTLAVALSMAATPILLVILNRLEQSSTEEAREADEIDEEQPRVIIAGFGRFGQITGRLLLSSGVKMVVLDHDPDHIETLRKFGMKVFYGDATRMDLLESAGAAKAEVLINAIDDPQTNLQLTEMVKEHFPHLQIIARARDVDHYIRLRQAGVEKPERETFEGALKTGRLALESLGLGPYEARERADVFRRFNIQMVEEMAMVENDTKARAAVYKRTSAMLSEIITEDREHLSLIQRHGWQGTEEGKHTGNMADEPETKPSS</sequence>
<evidence type="ECO:0000255" key="1">
    <source>
        <dbReference type="HAMAP-Rule" id="MF_01413"/>
    </source>
</evidence>
<evidence type="ECO:0000255" key="2">
    <source>
        <dbReference type="PROSITE-ProRule" id="PRU00543"/>
    </source>
</evidence>
<evidence type="ECO:0000256" key="3">
    <source>
        <dbReference type="SAM" id="MobiDB-lite"/>
    </source>
</evidence>
<organism>
    <name type="scientific">Shigella sonnei (strain Ss046)</name>
    <dbReference type="NCBI Taxonomy" id="300269"/>
    <lineage>
        <taxon>Bacteria</taxon>
        <taxon>Pseudomonadati</taxon>
        <taxon>Pseudomonadota</taxon>
        <taxon>Gammaproteobacteria</taxon>
        <taxon>Enterobacterales</taxon>
        <taxon>Enterobacteriaceae</taxon>
        <taxon>Shigella</taxon>
    </lineage>
</organism>
<feature type="chain" id="PRO_1000087399" description="Glutathione-regulated potassium-efflux system protein KefC">
    <location>
        <begin position="1"/>
        <end position="620"/>
    </location>
</feature>
<feature type="transmembrane region" description="Helical" evidence="1">
    <location>
        <begin position="4"/>
        <end position="24"/>
    </location>
</feature>
<feature type="transmembrane region" description="Helical" evidence="1">
    <location>
        <begin position="26"/>
        <end position="46"/>
    </location>
</feature>
<feature type="transmembrane region" description="Helical" evidence="1">
    <location>
        <begin position="54"/>
        <end position="74"/>
    </location>
</feature>
<feature type="transmembrane region" description="Helical" evidence="1">
    <location>
        <begin position="90"/>
        <end position="110"/>
    </location>
</feature>
<feature type="transmembrane region" description="Helical" evidence="1">
    <location>
        <begin position="114"/>
        <end position="134"/>
    </location>
</feature>
<feature type="transmembrane region" description="Helical" evidence="1">
    <location>
        <begin position="149"/>
        <end position="169"/>
    </location>
</feature>
<feature type="transmembrane region" description="Helical" evidence="1">
    <location>
        <begin position="178"/>
        <end position="198"/>
    </location>
</feature>
<feature type="transmembrane region" description="Helical" evidence="1">
    <location>
        <begin position="218"/>
        <end position="238"/>
    </location>
</feature>
<feature type="transmembrane region" description="Helical" evidence="1">
    <location>
        <begin position="270"/>
        <end position="290"/>
    </location>
</feature>
<feature type="transmembrane region" description="Helical" evidence="1">
    <location>
        <begin position="294"/>
        <end position="314"/>
    </location>
</feature>
<feature type="transmembrane region" description="Helical" evidence="1">
    <location>
        <begin position="327"/>
        <end position="347"/>
    </location>
</feature>
<feature type="transmembrane region" description="Helical" evidence="1">
    <location>
        <begin position="359"/>
        <end position="379"/>
    </location>
</feature>
<feature type="domain" description="RCK N-terminal" evidence="2">
    <location>
        <begin position="399"/>
        <end position="518"/>
    </location>
</feature>
<feature type="region of interest" description="Disordered" evidence="3">
    <location>
        <begin position="597"/>
        <end position="620"/>
    </location>
</feature>
<reference key="1">
    <citation type="journal article" date="2005" name="Nucleic Acids Res.">
        <title>Genome dynamics and diversity of Shigella species, the etiologic agents of bacillary dysentery.</title>
        <authorList>
            <person name="Yang F."/>
            <person name="Yang J."/>
            <person name="Zhang X."/>
            <person name="Chen L."/>
            <person name="Jiang Y."/>
            <person name="Yan Y."/>
            <person name="Tang X."/>
            <person name="Wang J."/>
            <person name="Xiong Z."/>
            <person name="Dong J."/>
            <person name="Xue Y."/>
            <person name="Zhu Y."/>
            <person name="Xu X."/>
            <person name="Sun L."/>
            <person name="Chen S."/>
            <person name="Nie H."/>
            <person name="Peng J."/>
            <person name="Xu J."/>
            <person name="Wang Y."/>
            <person name="Yuan Z."/>
            <person name="Wen Y."/>
            <person name="Yao Z."/>
            <person name="Shen Y."/>
            <person name="Qiang B."/>
            <person name="Hou Y."/>
            <person name="Yu J."/>
            <person name="Jin Q."/>
        </authorList>
    </citation>
    <scope>NUCLEOTIDE SEQUENCE [LARGE SCALE GENOMIC DNA]</scope>
    <source>
        <strain>Ss046</strain>
    </source>
</reference>
<dbReference type="EMBL" id="CP000038">
    <property type="protein sequence ID" value="AAZ86850.1"/>
    <property type="molecule type" value="Genomic_DNA"/>
</dbReference>
<dbReference type="RefSeq" id="WP_000377103.1">
    <property type="nucleotide sequence ID" value="NC_007384.1"/>
</dbReference>
<dbReference type="SMR" id="Q3Z5W2"/>
<dbReference type="GeneID" id="93777388"/>
<dbReference type="KEGG" id="ssn:SSON_0055"/>
<dbReference type="HOGENOM" id="CLU_005126_9_3_6"/>
<dbReference type="Proteomes" id="UP000002529">
    <property type="component" value="Chromosome"/>
</dbReference>
<dbReference type="GO" id="GO:0005886">
    <property type="term" value="C:plasma membrane"/>
    <property type="evidence" value="ECO:0007669"/>
    <property type="project" value="UniProtKB-SubCell"/>
</dbReference>
<dbReference type="GO" id="GO:0019899">
    <property type="term" value="F:enzyme binding"/>
    <property type="evidence" value="ECO:0007669"/>
    <property type="project" value="InterPro"/>
</dbReference>
<dbReference type="GO" id="GO:0015503">
    <property type="term" value="F:glutathione-regulated potassium exporter activity"/>
    <property type="evidence" value="ECO:0007669"/>
    <property type="project" value="UniProtKB-UniRule"/>
</dbReference>
<dbReference type="GO" id="GO:0015643">
    <property type="term" value="F:toxic substance binding"/>
    <property type="evidence" value="ECO:0007669"/>
    <property type="project" value="InterPro"/>
</dbReference>
<dbReference type="GO" id="GO:1902600">
    <property type="term" value="P:proton transmembrane transport"/>
    <property type="evidence" value="ECO:0007669"/>
    <property type="project" value="InterPro"/>
</dbReference>
<dbReference type="GO" id="GO:0051595">
    <property type="term" value="P:response to methylglyoxal"/>
    <property type="evidence" value="ECO:0007669"/>
    <property type="project" value="InterPro"/>
</dbReference>
<dbReference type="FunFam" id="1.20.1530.20:FF:000001">
    <property type="entry name" value="Glutathione-regulated potassium-efflux system protein KefB"/>
    <property type="match status" value="1"/>
</dbReference>
<dbReference type="FunFam" id="3.40.50.720:FF:000036">
    <property type="entry name" value="Glutathione-regulated potassium-efflux system protein KefB"/>
    <property type="match status" value="1"/>
</dbReference>
<dbReference type="Gene3D" id="1.20.1530.20">
    <property type="match status" value="1"/>
</dbReference>
<dbReference type="Gene3D" id="3.40.50.720">
    <property type="entry name" value="NAD(P)-binding Rossmann-like Domain"/>
    <property type="match status" value="1"/>
</dbReference>
<dbReference type="HAMAP" id="MF_01413">
    <property type="entry name" value="K_H_efflux_KefC"/>
    <property type="match status" value="1"/>
</dbReference>
<dbReference type="InterPro" id="IPR006153">
    <property type="entry name" value="Cation/H_exchanger_TM"/>
</dbReference>
<dbReference type="InterPro" id="IPR004771">
    <property type="entry name" value="K/H_exchanger"/>
</dbReference>
<dbReference type="InterPro" id="IPR023941">
    <property type="entry name" value="K_H_efflux_KefC"/>
</dbReference>
<dbReference type="InterPro" id="IPR006036">
    <property type="entry name" value="K_uptake_TrkA"/>
</dbReference>
<dbReference type="InterPro" id="IPR038770">
    <property type="entry name" value="Na+/solute_symporter_sf"/>
</dbReference>
<dbReference type="InterPro" id="IPR036291">
    <property type="entry name" value="NAD(P)-bd_dom_sf"/>
</dbReference>
<dbReference type="InterPro" id="IPR003148">
    <property type="entry name" value="RCK_N"/>
</dbReference>
<dbReference type="NCBIfam" id="TIGR00932">
    <property type="entry name" value="2a37"/>
    <property type="match status" value="1"/>
</dbReference>
<dbReference type="NCBIfam" id="NF002924">
    <property type="entry name" value="PRK03562.1"/>
    <property type="match status" value="1"/>
</dbReference>
<dbReference type="PANTHER" id="PTHR46157:SF3">
    <property type="entry name" value="GLUTATHIONE-REGULATED POTASSIUM-EFFLUX SYSTEM PROTEIN KEFC"/>
    <property type="match status" value="1"/>
</dbReference>
<dbReference type="PANTHER" id="PTHR46157">
    <property type="entry name" value="K(+) EFFLUX ANTIPORTER 3, CHLOROPLASTIC"/>
    <property type="match status" value="1"/>
</dbReference>
<dbReference type="Pfam" id="PF00999">
    <property type="entry name" value="Na_H_Exchanger"/>
    <property type="match status" value="1"/>
</dbReference>
<dbReference type="Pfam" id="PF02254">
    <property type="entry name" value="TrkA_N"/>
    <property type="match status" value="1"/>
</dbReference>
<dbReference type="PRINTS" id="PR00335">
    <property type="entry name" value="KUPTAKETRKA"/>
</dbReference>
<dbReference type="SUPFAM" id="SSF51735">
    <property type="entry name" value="NAD(P)-binding Rossmann-fold domains"/>
    <property type="match status" value="1"/>
</dbReference>
<dbReference type="PROSITE" id="PS51201">
    <property type="entry name" value="RCK_N"/>
    <property type="match status" value="1"/>
</dbReference>
<keyword id="KW-0050">Antiport</keyword>
<keyword id="KW-0997">Cell inner membrane</keyword>
<keyword id="KW-1003">Cell membrane</keyword>
<keyword id="KW-0406">Ion transport</keyword>
<keyword id="KW-0472">Membrane</keyword>
<keyword id="KW-0630">Potassium</keyword>
<keyword id="KW-0633">Potassium transport</keyword>
<keyword id="KW-1185">Reference proteome</keyword>
<keyword id="KW-0812">Transmembrane</keyword>
<keyword id="KW-1133">Transmembrane helix</keyword>
<keyword id="KW-0813">Transport</keyword>
<protein>
    <recommendedName>
        <fullName evidence="1">Glutathione-regulated potassium-efflux system protein KefC</fullName>
    </recommendedName>
    <alternativeName>
        <fullName evidence="1">K(+)/H(+) antiporter</fullName>
    </alternativeName>
</protein>
<accession>Q3Z5W2</accession>
<gene>
    <name evidence="1" type="primary">kefC</name>
    <name type="ordered locus">SSON_0055</name>
</gene>
<comment type="function">
    <text evidence="1">Pore-forming subunit of a potassium efflux system that confers protection against electrophiles. Catalyzes K(+)/H(+) antiport.</text>
</comment>
<comment type="subunit">
    <text evidence="1">Homodimer. Interacts with the regulatory subunit KefF.</text>
</comment>
<comment type="subcellular location">
    <subcellularLocation>
        <location evidence="1">Cell inner membrane</location>
        <topology evidence="1">Multi-pass membrane protein</topology>
    </subcellularLocation>
</comment>
<comment type="similarity">
    <text evidence="1">Belongs to the monovalent cation:proton antiporter 2 (CPA2) transporter (TC 2.A.37) family. KefC subfamily.</text>
</comment>
<proteinExistence type="inferred from homology"/>